<name>NUOM_BUCBP</name>
<dbReference type="EC" id="7.1.1.-"/>
<dbReference type="EMBL" id="AE016826">
    <property type="protein sequence ID" value="AAO26888.1"/>
    <property type="molecule type" value="Genomic_DNA"/>
</dbReference>
<dbReference type="RefSeq" id="WP_011091289.1">
    <property type="nucleotide sequence ID" value="NC_004545.1"/>
</dbReference>
<dbReference type="SMR" id="Q89AT5"/>
<dbReference type="STRING" id="224915.bbp_154"/>
<dbReference type="KEGG" id="bab:bbp_154"/>
<dbReference type="eggNOG" id="COG1008">
    <property type="taxonomic scope" value="Bacteria"/>
</dbReference>
<dbReference type="HOGENOM" id="CLU_007100_4_4_6"/>
<dbReference type="OrthoDB" id="9768329at2"/>
<dbReference type="Proteomes" id="UP000000601">
    <property type="component" value="Chromosome"/>
</dbReference>
<dbReference type="GO" id="GO:0005886">
    <property type="term" value="C:plasma membrane"/>
    <property type="evidence" value="ECO:0007669"/>
    <property type="project" value="UniProtKB-SubCell"/>
</dbReference>
<dbReference type="GO" id="GO:0008137">
    <property type="term" value="F:NADH dehydrogenase (ubiquinone) activity"/>
    <property type="evidence" value="ECO:0007669"/>
    <property type="project" value="InterPro"/>
</dbReference>
<dbReference type="GO" id="GO:0048039">
    <property type="term" value="F:ubiquinone binding"/>
    <property type="evidence" value="ECO:0007669"/>
    <property type="project" value="TreeGrafter"/>
</dbReference>
<dbReference type="GO" id="GO:0042773">
    <property type="term" value="P:ATP synthesis coupled electron transport"/>
    <property type="evidence" value="ECO:0007669"/>
    <property type="project" value="InterPro"/>
</dbReference>
<dbReference type="GO" id="GO:0015990">
    <property type="term" value="P:electron transport coupled proton transport"/>
    <property type="evidence" value="ECO:0007669"/>
    <property type="project" value="TreeGrafter"/>
</dbReference>
<dbReference type="InterPro" id="IPR010227">
    <property type="entry name" value="NADH_Q_OxRdtase_chainM/4"/>
</dbReference>
<dbReference type="InterPro" id="IPR003918">
    <property type="entry name" value="NADH_UbQ_OxRdtase"/>
</dbReference>
<dbReference type="InterPro" id="IPR001750">
    <property type="entry name" value="ND/Mrp_TM"/>
</dbReference>
<dbReference type="NCBIfam" id="TIGR01972">
    <property type="entry name" value="NDH_I_M"/>
    <property type="match status" value="1"/>
</dbReference>
<dbReference type="PANTHER" id="PTHR43507">
    <property type="entry name" value="NADH-UBIQUINONE OXIDOREDUCTASE CHAIN 4"/>
    <property type="match status" value="1"/>
</dbReference>
<dbReference type="PANTHER" id="PTHR43507:SF1">
    <property type="entry name" value="NADH-UBIQUINONE OXIDOREDUCTASE CHAIN 4"/>
    <property type="match status" value="1"/>
</dbReference>
<dbReference type="Pfam" id="PF00361">
    <property type="entry name" value="Proton_antipo_M"/>
    <property type="match status" value="1"/>
</dbReference>
<dbReference type="PRINTS" id="PR01437">
    <property type="entry name" value="NUOXDRDTASE4"/>
</dbReference>
<protein>
    <recommendedName>
        <fullName>NADH-quinone oxidoreductase subunit M</fullName>
        <ecNumber>7.1.1.-</ecNumber>
    </recommendedName>
    <alternativeName>
        <fullName>NADH dehydrogenase I subunit M</fullName>
    </alternativeName>
    <alternativeName>
        <fullName>NDH-1 subunit M</fullName>
    </alternativeName>
</protein>
<sequence length="508" mass="57986">MLLPMLVSIPFFGGFLCLLFNQKNAKISYYLALTSMALVFILSLILLFNTINVIVSSISNSSWSFEYIVPWIEKFGISFHLAVDRLSILMLNLTSILGLVSVFCSWKKVQKNIGLFYFGLLWTLGSIIGIFISVDLFLFFCFWELSVLPTYFLMIMWGYKDNDRKFYYNNIFSANKFFIYSQISGLVLLLSTLVLVYTHYIYDHILTFDYDVLKHTSMNIVLESCIMLGFFLAFAIKIPIVPFHSWLPDFHCYSPVIGVVDISGILLKTSIYALMRFNIPLFPHSTEIFSSIIMFFGIITIFYGAIVSLFQNNIKRFIAYVSISHMGFILIAIYSINQVAYQGAIIQLISYSLSTAALFLLSGHVFKSISTFDIDKMGGLWSKLRWIPGFLLIFSIINLGVPGTGNFVGEFMIFMGCFNSHLMIVILSIFSLILLALCSLMFVQKICFGPINNRYDFLCDLNVMTICDFLIFVFLLVLILIIGLYPNIIIDVSYSPLCSIRNIFSNFI</sequence>
<accession>Q89AT5</accession>
<gene>
    <name type="primary">nuoM</name>
    <name type="ordered locus">bbp_154</name>
</gene>
<reference key="1">
    <citation type="journal article" date="2003" name="Proc. Natl. Acad. Sci. U.S.A.">
        <title>Reductive genome evolution in Buchnera aphidicola.</title>
        <authorList>
            <person name="van Ham R.C.H.J."/>
            <person name="Kamerbeek J."/>
            <person name="Palacios C."/>
            <person name="Rausell C."/>
            <person name="Abascal F."/>
            <person name="Bastolla U."/>
            <person name="Fernandez J.M."/>
            <person name="Jimenez L."/>
            <person name="Postigo M."/>
            <person name="Silva F.J."/>
            <person name="Tamames J."/>
            <person name="Viguera E."/>
            <person name="Latorre A."/>
            <person name="Valencia A."/>
            <person name="Moran F."/>
            <person name="Moya A."/>
        </authorList>
    </citation>
    <scope>NUCLEOTIDE SEQUENCE [LARGE SCALE GENOMIC DNA]</scope>
    <source>
        <strain>Bp</strain>
    </source>
</reference>
<keyword id="KW-1003">Cell membrane</keyword>
<keyword id="KW-0472">Membrane</keyword>
<keyword id="KW-0520">NAD</keyword>
<keyword id="KW-0874">Quinone</keyword>
<keyword id="KW-1185">Reference proteome</keyword>
<keyword id="KW-1278">Translocase</keyword>
<keyword id="KW-0812">Transmembrane</keyword>
<keyword id="KW-1133">Transmembrane helix</keyword>
<comment type="function">
    <text evidence="1">NDH-1 shuttles electrons from NADH, via FMN and iron-sulfur (Fe-S) centers, to quinones in the respiratory chain. Couples the redox reaction to proton translocation (for every two electrons transferred, four hydrogen ions are translocated across the cytoplasmic membrane), and thus conserves the redox energy in a proton gradient (By similarity).</text>
</comment>
<comment type="catalytic activity">
    <reaction>
        <text>a quinone + NADH + 5 H(+)(in) = a quinol + NAD(+) + 4 H(+)(out)</text>
        <dbReference type="Rhea" id="RHEA:57888"/>
        <dbReference type="ChEBI" id="CHEBI:15378"/>
        <dbReference type="ChEBI" id="CHEBI:24646"/>
        <dbReference type="ChEBI" id="CHEBI:57540"/>
        <dbReference type="ChEBI" id="CHEBI:57945"/>
        <dbReference type="ChEBI" id="CHEBI:132124"/>
    </reaction>
</comment>
<comment type="subunit">
    <text evidence="1">Composed of 13 different subunits. Subunits NuoA, H, J, K, L, M, N constitute the membrane sector of the complex (By similarity).</text>
</comment>
<comment type="subcellular location">
    <subcellularLocation>
        <location evidence="3">Cell membrane</location>
        <topology evidence="3">Multi-pass membrane protein</topology>
    </subcellularLocation>
</comment>
<comment type="similarity">
    <text evidence="3">Belongs to the complex I subunit 4 family.</text>
</comment>
<organism>
    <name type="scientific">Buchnera aphidicola subsp. Baizongia pistaciae (strain Bp)</name>
    <dbReference type="NCBI Taxonomy" id="224915"/>
    <lineage>
        <taxon>Bacteria</taxon>
        <taxon>Pseudomonadati</taxon>
        <taxon>Pseudomonadota</taxon>
        <taxon>Gammaproteobacteria</taxon>
        <taxon>Enterobacterales</taxon>
        <taxon>Erwiniaceae</taxon>
        <taxon>Buchnera</taxon>
    </lineage>
</organism>
<feature type="chain" id="PRO_0000118043" description="NADH-quinone oxidoreductase subunit M">
    <location>
        <begin position="1"/>
        <end position="508"/>
    </location>
</feature>
<feature type="transmembrane region" description="Helical" evidence="2">
    <location>
        <begin position="1"/>
        <end position="21"/>
    </location>
</feature>
<feature type="transmembrane region" description="Helical" evidence="2">
    <location>
        <begin position="36"/>
        <end position="56"/>
    </location>
</feature>
<feature type="transmembrane region" description="Helical" evidence="2">
    <location>
        <begin position="63"/>
        <end position="83"/>
    </location>
</feature>
<feature type="transmembrane region" description="Helical" evidence="2">
    <location>
        <begin position="86"/>
        <end position="106"/>
    </location>
</feature>
<feature type="transmembrane region" description="Helical" evidence="2">
    <location>
        <begin position="113"/>
        <end position="133"/>
    </location>
</feature>
<feature type="transmembrane region" description="Helical" evidence="2">
    <location>
        <begin position="136"/>
        <end position="156"/>
    </location>
</feature>
<feature type="transmembrane region" description="Helical" evidence="2">
    <location>
        <begin position="177"/>
        <end position="197"/>
    </location>
</feature>
<feature type="transmembrane region" description="Helical" evidence="2">
    <location>
        <begin position="220"/>
        <end position="240"/>
    </location>
</feature>
<feature type="transmembrane region" description="Helical" evidence="2">
    <location>
        <begin position="255"/>
        <end position="275"/>
    </location>
</feature>
<feature type="transmembrane region" description="Helical" evidence="2">
    <location>
        <begin position="288"/>
        <end position="308"/>
    </location>
</feature>
<feature type="transmembrane region" description="Helical" evidence="2">
    <location>
        <begin position="317"/>
        <end position="337"/>
    </location>
</feature>
<feature type="transmembrane region" description="Helical" evidence="2">
    <location>
        <begin position="343"/>
        <end position="363"/>
    </location>
</feature>
<feature type="transmembrane region" description="Helical" evidence="2">
    <location>
        <begin position="389"/>
        <end position="409"/>
    </location>
</feature>
<feature type="transmembrane region" description="Helical" evidence="2">
    <location>
        <begin position="423"/>
        <end position="443"/>
    </location>
</feature>
<feature type="transmembrane region" description="Helical" evidence="2">
    <location>
        <begin position="470"/>
        <end position="490"/>
    </location>
</feature>
<proteinExistence type="inferred from homology"/>
<evidence type="ECO:0000250" key="1"/>
<evidence type="ECO:0000255" key="2"/>
<evidence type="ECO:0000305" key="3"/>